<sequence>MCGILGIALADQSSVVAPELFDGSLFLQHRGQDAAGMATCGERGRLYQCKGNGMARDVFTQHRMSGLVGSMGIAHLRYPTAGSCANSEAQPFYVNSPYGICLSHNGTLVNTLSLRSYLDEVVHRHINTDSDSELLLNVFAAELERHNKYRVNNDDIFHALEGVYRQCRGGYACVGMLAGYSLFGFRDPNGIRPLLFGERVNPDGTKDYMLASESVVLKAHNFNKFRDLKPGEAVIIPKDCNKQEPEFRQVVPTNSYRPDLFEYVYFARPDSVLDGISVYHTRLQMGIKLAENVKKVVDPDEIDVVVSVPDTARTCALQCANHLNKPYREAFVKNRYVGRTFIMPNQKERVSSVRRKLNPMDFEFKDKRVLIVDDSIVRGTTSKEIINMAKESGATKVYFASAAPAIRFNHIYGIDLADTKQLVAYNRTTDEVAQELGCEKVIYQSLEDLVDCCKTDKIDKFEVGVFTGNYVTGVEDGYLQELERVRALNKAKLTTAKAEVDIGLYNSADY</sequence>
<accession>Q12698</accession>
<name>PUR1_LACKL</name>
<comment type="catalytic activity">
    <reaction>
        <text>5-phospho-beta-D-ribosylamine + L-glutamate + diphosphate = 5-phospho-alpha-D-ribose 1-diphosphate + L-glutamine + H2O</text>
        <dbReference type="Rhea" id="RHEA:14905"/>
        <dbReference type="ChEBI" id="CHEBI:15377"/>
        <dbReference type="ChEBI" id="CHEBI:29985"/>
        <dbReference type="ChEBI" id="CHEBI:33019"/>
        <dbReference type="ChEBI" id="CHEBI:58017"/>
        <dbReference type="ChEBI" id="CHEBI:58359"/>
        <dbReference type="ChEBI" id="CHEBI:58681"/>
        <dbReference type="EC" id="2.4.2.14"/>
    </reaction>
</comment>
<comment type="cofactor">
    <cofactor>
        <name>Mg(2+)</name>
        <dbReference type="ChEBI" id="CHEBI:18420"/>
    </cofactor>
    <text>Binds 1 Mg(2+) ion per subunit.</text>
</comment>
<comment type="pathway">
    <text>Purine metabolism; IMP biosynthesis via de novo pathway; N(1)-(5-phospho-D-ribosyl)glycinamide from 5-phospho-alpha-D-ribose 1-diphosphate: step 1/2.</text>
</comment>
<comment type="similarity">
    <text evidence="3">In the C-terminal section; belongs to the purine/pyrimidine phosphoribosyltransferase family.</text>
</comment>
<keyword id="KW-0315">Glutamine amidotransferase</keyword>
<keyword id="KW-0328">Glycosyltransferase</keyword>
<keyword id="KW-0460">Magnesium</keyword>
<keyword id="KW-0479">Metal-binding</keyword>
<keyword id="KW-0658">Purine biosynthesis</keyword>
<keyword id="KW-0808">Transferase</keyword>
<reference key="1">
    <citation type="submission" date="1995-08" db="EMBL/GenBank/DDBJ databases">
        <authorList>
            <person name="Marsh L."/>
            <person name="Branda S."/>
        </authorList>
    </citation>
    <scope>NUCLEOTIDE SEQUENCE [GENOMIC DNA]</scope>
    <source>
        <strain>IH404</strain>
    </source>
</reference>
<proteinExistence type="inferred from homology"/>
<organism>
    <name type="scientific">Lachancea kluyveri</name>
    <name type="common">Yeast</name>
    <name type="synonym">Saccharomyces kluyveri</name>
    <dbReference type="NCBI Taxonomy" id="4934"/>
    <lineage>
        <taxon>Eukaryota</taxon>
        <taxon>Fungi</taxon>
        <taxon>Dikarya</taxon>
        <taxon>Ascomycota</taxon>
        <taxon>Saccharomycotina</taxon>
        <taxon>Saccharomycetes</taxon>
        <taxon>Saccharomycetales</taxon>
        <taxon>Saccharomycetaceae</taxon>
        <taxon>Lachancea</taxon>
    </lineage>
</organism>
<dbReference type="EC" id="2.4.2.14"/>
<dbReference type="EMBL" id="U32992">
    <property type="protein sequence ID" value="AAA75450.1"/>
    <property type="molecule type" value="Genomic_DNA"/>
</dbReference>
<dbReference type="SMR" id="Q12698"/>
<dbReference type="MEROPS" id="C44.001"/>
<dbReference type="UniPathway" id="UPA00074">
    <property type="reaction ID" value="UER00124"/>
</dbReference>
<dbReference type="GO" id="GO:0004044">
    <property type="term" value="F:amidophosphoribosyltransferase activity"/>
    <property type="evidence" value="ECO:0007669"/>
    <property type="project" value="UniProtKB-EC"/>
</dbReference>
<dbReference type="GO" id="GO:0046872">
    <property type="term" value="F:metal ion binding"/>
    <property type="evidence" value="ECO:0007669"/>
    <property type="project" value="UniProtKB-KW"/>
</dbReference>
<dbReference type="GO" id="GO:0006189">
    <property type="term" value="P:'de novo' IMP biosynthetic process"/>
    <property type="evidence" value="ECO:0007669"/>
    <property type="project" value="UniProtKB-UniPathway"/>
</dbReference>
<dbReference type="GO" id="GO:0009113">
    <property type="term" value="P:purine nucleobase biosynthetic process"/>
    <property type="evidence" value="ECO:0007669"/>
    <property type="project" value="InterPro"/>
</dbReference>
<dbReference type="CDD" id="cd00715">
    <property type="entry name" value="GPATase_N"/>
    <property type="match status" value="1"/>
</dbReference>
<dbReference type="CDD" id="cd06223">
    <property type="entry name" value="PRTases_typeI"/>
    <property type="match status" value="1"/>
</dbReference>
<dbReference type="Gene3D" id="3.40.50.2020">
    <property type="match status" value="1"/>
</dbReference>
<dbReference type="Gene3D" id="3.60.20.10">
    <property type="entry name" value="Glutamine Phosphoribosylpyrophosphate, subunit 1, domain 1"/>
    <property type="match status" value="1"/>
</dbReference>
<dbReference type="HAMAP" id="MF_01931">
    <property type="entry name" value="PurF"/>
    <property type="match status" value="1"/>
</dbReference>
<dbReference type="InterPro" id="IPR017932">
    <property type="entry name" value="GATase_2_dom"/>
</dbReference>
<dbReference type="InterPro" id="IPR029055">
    <property type="entry name" value="Ntn_hydrolases_N"/>
</dbReference>
<dbReference type="InterPro" id="IPR000836">
    <property type="entry name" value="PRibTrfase_dom"/>
</dbReference>
<dbReference type="InterPro" id="IPR029057">
    <property type="entry name" value="PRTase-like"/>
</dbReference>
<dbReference type="InterPro" id="IPR005854">
    <property type="entry name" value="PurF"/>
</dbReference>
<dbReference type="InterPro" id="IPR035584">
    <property type="entry name" value="PurF_N"/>
</dbReference>
<dbReference type="NCBIfam" id="TIGR01134">
    <property type="entry name" value="purF"/>
    <property type="match status" value="1"/>
</dbReference>
<dbReference type="PANTHER" id="PTHR11907">
    <property type="entry name" value="AMIDOPHOSPHORIBOSYLTRANSFERASE"/>
    <property type="match status" value="1"/>
</dbReference>
<dbReference type="Pfam" id="PF13522">
    <property type="entry name" value="GATase_6"/>
    <property type="match status" value="1"/>
</dbReference>
<dbReference type="Pfam" id="PF00156">
    <property type="entry name" value="Pribosyltran"/>
    <property type="match status" value="1"/>
</dbReference>
<dbReference type="PIRSF" id="PIRSF000485">
    <property type="entry name" value="Amd_phspho_trans"/>
    <property type="match status" value="1"/>
</dbReference>
<dbReference type="SUPFAM" id="SSF56235">
    <property type="entry name" value="N-terminal nucleophile aminohydrolases (Ntn hydrolases)"/>
    <property type="match status" value="1"/>
</dbReference>
<dbReference type="SUPFAM" id="SSF53271">
    <property type="entry name" value="PRTase-like"/>
    <property type="match status" value="1"/>
</dbReference>
<dbReference type="PROSITE" id="PS51278">
    <property type="entry name" value="GATASE_TYPE_2"/>
    <property type="match status" value="1"/>
</dbReference>
<dbReference type="PROSITE" id="PS00103">
    <property type="entry name" value="PUR_PYR_PR_TRANSFER"/>
    <property type="match status" value="1"/>
</dbReference>
<evidence type="ECO:0000250" key="1"/>
<evidence type="ECO:0000255" key="2">
    <source>
        <dbReference type="PROSITE-ProRule" id="PRU00609"/>
    </source>
</evidence>
<evidence type="ECO:0000305" key="3"/>
<gene>
    <name type="primary">ADE4</name>
</gene>
<feature type="initiator methionine" description="Removed" evidence="1">
    <location>
        <position position="1"/>
    </location>
</feature>
<feature type="chain" id="PRO_0000139645" description="Amidophosphoribosyltransferase">
    <location>
        <begin position="2"/>
        <end position="510"/>
    </location>
</feature>
<feature type="domain" description="Glutamine amidotransferase type-2" evidence="2">
    <location>
        <begin position="2"/>
        <end position="239"/>
    </location>
</feature>
<feature type="active site" description="Nucleophile" evidence="2">
    <location>
        <position position="2"/>
    </location>
</feature>
<feature type="binding site" evidence="1">
    <location>
        <position position="373"/>
    </location>
    <ligand>
        <name>Mg(2+)</name>
        <dbReference type="ChEBI" id="CHEBI:18420"/>
    </ligand>
</feature>
<feature type="binding site" evidence="1">
    <location>
        <position position="374"/>
    </location>
    <ligand>
        <name>Mg(2+)</name>
        <dbReference type="ChEBI" id="CHEBI:18420"/>
    </ligand>
</feature>
<protein>
    <recommendedName>
        <fullName>Amidophosphoribosyltransferase</fullName>
        <shortName>ATase</shortName>
        <ecNumber>2.4.2.14</ecNumber>
    </recommendedName>
    <alternativeName>
        <fullName>Glutamine phosphoribosylpyrophosphate amidotransferase</fullName>
    </alternativeName>
</protein>